<gene>
    <name evidence="3" type="ordered locus">DR_0049</name>
</gene>
<evidence type="ECO:0000269" key="1">
    <source>
    </source>
</evidence>
<evidence type="ECO:0000305" key="2"/>
<evidence type="ECO:0000312" key="3">
    <source>
        <dbReference type="EMBL" id="AAF09641.1"/>
    </source>
</evidence>
<organism>
    <name type="scientific">Deinococcus radiodurans (strain ATCC 13939 / DSM 20539 / JCM 16871 / CCUG 27074 / LMG 4051 / NBRC 15346 / NCIMB 9279 / VKM B-1422 / R1)</name>
    <dbReference type="NCBI Taxonomy" id="243230"/>
    <lineage>
        <taxon>Bacteria</taxon>
        <taxon>Thermotogati</taxon>
        <taxon>Deinococcota</taxon>
        <taxon>Deinococci</taxon>
        <taxon>Deinococcales</taxon>
        <taxon>Deinococcaceae</taxon>
        <taxon>Deinococcus</taxon>
    </lineage>
</organism>
<reference key="1">
    <citation type="journal article" date="1999" name="Science">
        <title>Genome sequence of the radioresistant bacterium Deinococcus radiodurans R1.</title>
        <authorList>
            <person name="White O."/>
            <person name="Eisen J.A."/>
            <person name="Heidelberg J.F."/>
            <person name="Hickey E.K."/>
            <person name="Peterson J.D."/>
            <person name="Dodson R.J."/>
            <person name="Haft D.H."/>
            <person name="Gwinn M.L."/>
            <person name="Nelson W.C."/>
            <person name="Richardson D.L."/>
            <person name="Moffat K.S."/>
            <person name="Qin H."/>
            <person name="Jiang L."/>
            <person name="Pamphile W."/>
            <person name="Crosby M."/>
            <person name="Shen M."/>
            <person name="Vamathevan J.J."/>
            <person name="Lam P."/>
            <person name="McDonald L.A."/>
            <person name="Utterback T.R."/>
            <person name="Zalewski C."/>
            <person name="Makarova K.S."/>
            <person name="Aravind L."/>
            <person name="Daly M.J."/>
            <person name="Minton K.W."/>
            <person name="Fleischmann R.D."/>
            <person name="Ketchum K.A."/>
            <person name="Nelson K.E."/>
            <person name="Salzberg S.L."/>
            <person name="Smith H.O."/>
            <person name="Venter J.C."/>
            <person name="Fraser C.M."/>
        </authorList>
    </citation>
    <scope>NUCLEOTIDE SEQUENCE [LARGE SCALE GENOMIC DNA]</scope>
    <source>
        <strain>ATCC 13939 / DSM 20539 / JCM 16871 / CCUG 27074 / LMG 4051 / NBRC 15346 / NCIMB 9279 / VKM B-1422 / R1</strain>
    </source>
</reference>
<reference key="2">
    <citation type="journal article" date="2016" name="Extremophiles">
        <title>Identification of the methyltransferase targeting C2499 in Deinococcus radiodurans 23S ribosomal RNA.</title>
        <authorList>
            <person name="Mundus J."/>
            <person name="Flyvbjerg K.F."/>
            <person name="Kirpekar F."/>
        </authorList>
    </citation>
    <scope>FUNCTION</scope>
    <scope>CATALYTIC ACTIVITY</scope>
    <source>
        <strain>ATCC 13939 / DSM 20539 / JCM 16871 / CCUG 27074 / LMG 4051 / NBRC 15346 / NCIMB 9279 / VKM B-1422 / R1</strain>
    </source>
</reference>
<dbReference type="EC" id="2.1.1.-" evidence="1"/>
<dbReference type="EMBL" id="AE000513">
    <property type="protein sequence ID" value="AAF09641.1"/>
    <property type="molecule type" value="Genomic_DNA"/>
</dbReference>
<dbReference type="PIR" id="G75565">
    <property type="entry name" value="G75565"/>
</dbReference>
<dbReference type="RefSeq" id="NP_293775.1">
    <property type="nucleotide sequence ID" value="NC_001263.1"/>
</dbReference>
<dbReference type="RefSeq" id="WP_010886697.1">
    <property type="nucleotide sequence ID" value="NC_001263.1"/>
</dbReference>
<dbReference type="SMR" id="Q9RYA1"/>
<dbReference type="FunCoup" id="Q9RYA1">
    <property type="interactions" value="220"/>
</dbReference>
<dbReference type="STRING" id="243230.DR_0049"/>
<dbReference type="PaxDb" id="243230-DR_0049"/>
<dbReference type="EnsemblBacteria" id="AAF09641">
    <property type="protein sequence ID" value="AAF09641"/>
    <property type="gene ID" value="DR_0049"/>
</dbReference>
<dbReference type="GeneID" id="69516279"/>
<dbReference type="KEGG" id="dra:DR_0049"/>
<dbReference type="PATRIC" id="fig|243230.17.peg.214"/>
<dbReference type="eggNOG" id="COG1092">
    <property type="taxonomic scope" value="Bacteria"/>
</dbReference>
<dbReference type="HOGENOM" id="CLU_014042_0_0_0"/>
<dbReference type="InParanoid" id="Q9RYA1"/>
<dbReference type="OrthoDB" id="9805492at2"/>
<dbReference type="Proteomes" id="UP000002524">
    <property type="component" value="Chromosome 1"/>
</dbReference>
<dbReference type="GO" id="GO:0008168">
    <property type="term" value="F:methyltransferase activity"/>
    <property type="evidence" value="ECO:0007669"/>
    <property type="project" value="UniProtKB-KW"/>
</dbReference>
<dbReference type="GO" id="GO:0003723">
    <property type="term" value="F:RNA binding"/>
    <property type="evidence" value="ECO:0007669"/>
    <property type="project" value="UniProtKB-KW"/>
</dbReference>
<dbReference type="GO" id="GO:0032259">
    <property type="term" value="P:methylation"/>
    <property type="evidence" value="ECO:0007669"/>
    <property type="project" value="UniProtKB-KW"/>
</dbReference>
<dbReference type="GO" id="GO:0006364">
    <property type="term" value="P:rRNA processing"/>
    <property type="evidence" value="ECO:0007669"/>
    <property type="project" value="UniProtKB-KW"/>
</dbReference>
<dbReference type="CDD" id="cd02440">
    <property type="entry name" value="AdoMet_MTases"/>
    <property type="match status" value="1"/>
</dbReference>
<dbReference type="CDD" id="cd21153">
    <property type="entry name" value="PUA_RlmI"/>
    <property type="match status" value="1"/>
</dbReference>
<dbReference type="CDD" id="cd11572">
    <property type="entry name" value="RlmI_M_like"/>
    <property type="match status" value="1"/>
</dbReference>
<dbReference type="Gene3D" id="2.30.130.10">
    <property type="entry name" value="PUA domain"/>
    <property type="match status" value="1"/>
</dbReference>
<dbReference type="Gene3D" id="3.30.750.80">
    <property type="entry name" value="RNA methyltransferase domain (HRMD) like"/>
    <property type="match status" value="1"/>
</dbReference>
<dbReference type="Gene3D" id="3.40.50.150">
    <property type="entry name" value="Vaccinia Virus protein VP39"/>
    <property type="match status" value="1"/>
</dbReference>
<dbReference type="InterPro" id="IPR015947">
    <property type="entry name" value="PUA-like_sf"/>
</dbReference>
<dbReference type="InterPro" id="IPR036974">
    <property type="entry name" value="PUA_sf"/>
</dbReference>
<dbReference type="InterPro" id="IPR041532">
    <property type="entry name" value="RlmI-like_PUA"/>
</dbReference>
<dbReference type="InterPro" id="IPR019614">
    <property type="entry name" value="SAM-dep_methyl-trfase"/>
</dbReference>
<dbReference type="InterPro" id="IPR029063">
    <property type="entry name" value="SAM-dependent_MTases_sf"/>
</dbReference>
<dbReference type="NCBIfam" id="NF033380">
    <property type="entry name" value="Rlm_2499C5"/>
    <property type="match status" value="1"/>
</dbReference>
<dbReference type="PANTHER" id="PTHR43042:SF3">
    <property type="entry name" value="RIBOSOMAL RNA LARGE SUBUNIT METHYLTRANSFERASE YWBD-RELATED"/>
    <property type="match status" value="1"/>
</dbReference>
<dbReference type="PANTHER" id="PTHR43042">
    <property type="entry name" value="SAM-DEPENDENT METHYLTRANSFERASE"/>
    <property type="match status" value="1"/>
</dbReference>
<dbReference type="Pfam" id="PF10672">
    <property type="entry name" value="Methyltrans_SAM"/>
    <property type="match status" value="1"/>
</dbReference>
<dbReference type="Pfam" id="PF17785">
    <property type="entry name" value="PUA_3"/>
    <property type="match status" value="1"/>
</dbReference>
<dbReference type="SUPFAM" id="SSF88697">
    <property type="entry name" value="PUA domain-like"/>
    <property type="match status" value="1"/>
</dbReference>
<dbReference type="SUPFAM" id="SSF53335">
    <property type="entry name" value="S-adenosyl-L-methionine-dependent methyltransferases"/>
    <property type="match status" value="1"/>
</dbReference>
<name>MTR49_DEIRA</name>
<protein>
    <recommendedName>
        <fullName evidence="2">Ribosomal RNA large subunit methyltransferase DR_0049</fullName>
        <ecNumber evidence="1">2.1.1.-</ecNumber>
    </recommendedName>
    <alternativeName>
        <fullName evidence="2">23S rRNA m5C2499 methyltransferase</fullName>
    </alternativeName>
</protein>
<feature type="chain" id="PRO_0000448943" description="Ribosomal RNA large subunit methyltransferase DR_0049">
    <location>
        <begin position="1"/>
        <end position="408"/>
    </location>
</feature>
<sequence>MSAPASSAPRLRLRVSKAAELHIRDGHPWVYESSVREQNREGEPGELAVVYDRRDRFLAIGLYDPFSPLRLRVLHTGMPTQLDDAWWAARLDAALARRAALFGPLTAFGDTDGYRVLNGESDGFPGLVVDRYAGVLVMKLYTAAWFPHLRRMLELFAARAPDFAVVLRLSRNIAERAADLGLHDGQVIYGELAGDSVVFRESGLRFEAEVRQGQKTGFFLDQRENRRRVEGLSEGRRVLNAFSFSGGFSLYAARGGASEVTSLDISAHALRSAERNFALNPELSAVHKTVQADVFEWLPAGKGSGADYDLVILDPPSLARREAEREGAIRAYGKLAEGGLTRLAPGGILVSASCSAHVSAEEFEEAVMSAVRRSGRRWRKLLSSRHAPDHHASFAEAEYLKAVFLQMD</sequence>
<proteinExistence type="evidence at protein level"/>
<accession>Q9RYA1</accession>
<comment type="function">
    <text evidence="1">Specifically methylates the cytosine at position 2499 (m5C2499) of 23S rRNA.</text>
</comment>
<comment type="catalytic activity">
    <reaction evidence="1">
        <text>cytidine(2499) in 23S rRNA + S-adenosyl-L-methionine = 5-methylcytidine(2499) in 23S rRNA + S-adenosyl-L-homocysteine + H(+)</text>
        <dbReference type="Rhea" id="RHEA:62012"/>
        <dbReference type="Rhea" id="RHEA-COMP:16008"/>
        <dbReference type="Rhea" id="RHEA-COMP:16009"/>
        <dbReference type="ChEBI" id="CHEBI:15378"/>
        <dbReference type="ChEBI" id="CHEBI:57856"/>
        <dbReference type="ChEBI" id="CHEBI:59789"/>
        <dbReference type="ChEBI" id="CHEBI:74483"/>
        <dbReference type="ChEBI" id="CHEBI:82748"/>
    </reaction>
</comment>
<comment type="similarity">
    <text evidence="2">Belongs to the methyltransferase superfamily.</text>
</comment>
<keyword id="KW-0489">Methyltransferase</keyword>
<keyword id="KW-1185">Reference proteome</keyword>
<keyword id="KW-0694">RNA-binding</keyword>
<keyword id="KW-0698">rRNA processing</keyword>
<keyword id="KW-0949">S-adenosyl-L-methionine</keyword>
<keyword id="KW-0808">Transferase</keyword>